<organism>
    <name type="scientific">Polypterus ornatipinnis</name>
    <name type="common">Ornate bichir</name>
    <dbReference type="NCBI Taxonomy" id="49895"/>
    <lineage>
        <taxon>Eukaryota</taxon>
        <taxon>Metazoa</taxon>
        <taxon>Chordata</taxon>
        <taxon>Craniata</taxon>
        <taxon>Vertebrata</taxon>
        <taxon>Euteleostomi</taxon>
        <taxon>Actinopterygii</taxon>
        <taxon>Polypteriformes</taxon>
        <taxon>Polypteridae</taxon>
        <taxon>Polypterus</taxon>
    </lineage>
</organism>
<dbReference type="EC" id="7.1.1.9"/>
<dbReference type="EMBL" id="U62532">
    <property type="protein sequence ID" value="AAC60311.1"/>
    <property type="molecule type" value="Genomic_DNA"/>
</dbReference>
<dbReference type="PIR" id="T11460">
    <property type="entry name" value="T11460"/>
</dbReference>
<dbReference type="SMR" id="Q95914"/>
<dbReference type="CTD" id="4514"/>
<dbReference type="GO" id="GO:0005743">
    <property type="term" value="C:mitochondrial inner membrane"/>
    <property type="evidence" value="ECO:0007669"/>
    <property type="project" value="UniProtKB-SubCell"/>
</dbReference>
<dbReference type="GO" id="GO:0045277">
    <property type="term" value="C:respiratory chain complex IV"/>
    <property type="evidence" value="ECO:0000250"/>
    <property type="project" value="UniProtKB"/>
</dbReference>
<dbReference type="GO" id="GO:0004129">
    <property type="term" value="F:cytochrome-c oxidase activity"/>
    <property type="evidence" value="ECO:0007669"/>
    <property type="project" value="UniProtKB-EC"/>
</dbReference>
<dbReference type="GO" id="GO:0006123">
    <property type="term" value="P:mitochondrial electron transport, cytochrome c to oxygen"/>
    <property type="evidence" value="ECO:0007669"/>
    <property type="project" value="TreeGrafter"/>
</dbReference>
<dbReference type="CDD" id="cd01665">
    <property type="entry name" value="Cyt_c_Oxidase_III"/>
    <property type="match status" value="1"/>
</dbReference>
<dbReference type="FunFam" id="1.10.287.70:FF:000048">
    <property type="entry name" value="Cytochrome c oxidase subunit 3"/>
    <property type="match status" value="1"/>
</dbReference>
<dbReference type="FunFam" id="1.20.120.80:FF:000002">
    <property type="entry name" value="Cytochrome c oxidase subunit 3"/>
    <property type="match status" value="1"/>
</dbReference>
<dbReference type="Gene3D" id="1.10.287.70">
    <property type="match status" value="1"/>
</dbReference>
<dbReference type="Gene3D" id="1.20.120.80">
    <property type="entry name" value="Cytochrome c oxidase, subunit III, four-helix bundle"/>
    <property type="match status" value="1"/>
</dbReference>
<dbReference type="InterPro" id="IPR024791">
    <property type="entry name" value="Cyt_c/ubiquinol_Oxase_su3"/>
</dbReference>
<dbReference type="InterPro" id="IPR033945">
    <property type="entry name" value="Cyt_c_oxase_su3_dom"/>
</dbReference>
<dbReference type="InterPro" id="IPR000298">
    <property type="entry name" value="Cyt_c_oxidase-like_su3"/>
</dbReference>
<dbReference type="InterPro" id="IPR035973">
    <property type="entry name" value="Cyt_c_oxidase_su3-like_sf"/>
</dbReference>
<dbReference type="InterPro" id="IPR013833">
    <property type="entry name" value="Cyt_c_oxidase_su3_a-hlx"/>
</dbReference>
<dbReference type="PANTHER" id="PTHR11403:SF7">
    <property type="entry name" value="CYTOCHROME C OXIDASE SUBUNIT 3"/>
    <property type="match status" value="1"/>
</dbReference>
<dbReference type="PANTHER" id="PTHR11403">
    <property type="entry name" value="CYTOCHROME C OXIDASE SUBUNIT III"/>
    <property type="match status" value="1"/>
</dbReference>
<dbReference type="Pfam" id="PF00510">
    <property type="entry name" value="COX3"/>
    <property type="match status" value="1"/>
</dbReference>
<dbReference type="SUPFAM" id="SSF81452">
    <property type="entry name" value="Cytochrome c oxidase subunit III-like"/>
    <property type="match status" value="1"/>
</dbReference>
<dbReference type="PROSITE" id="PS50253">
    <property type="entry name" value="COX3"/>
    <property type="match status" value="1"/>
</dbReference>
<reference key="1">
    <citation type="journal article" date="1996" name="Genetics">
        <title>The complete mitochondrial DNA sequence of the bichir (Polypterus ornatipinnis), a basal ray-finned fish: ancient establishment of the consensus vertebrate gene order.</title>
        <authorList>
            <person name="Noack K."/>
            <person name="Zardoya R."/>
            <person name="Meyer A."/>
        </authorList>
    </citation>
    <scope>NUCLEOTIDE SEQUENCE [GENOMIC DNA]</scope>
</reference>
<name>COX3_POLOR</name>
<feature type="chain" id="PRO_0000183836" description="Cytochrome c oxidase subunit 3">
    <location>
        <begin position="1"/>
        <end position="261"/>
    </location>
</feature>
<feature type="topological domain" description="Mitochondrial matrix" evidence="1">
    <location>
        <begin position="1"/>
        <end position="15"/>
    </location>
</feature>
<feature type="transmembrane region" description="Helical; Name=I" evidence="1">
    <location>
        <begin position="16"/>
        <end position="34"/>
    </location>
</feature>
<feature type="topological domain" description="Mitochondrial intermembrane" evidence="1">
    <location>
        <begin position="35"/>
        <end position="40"/>
    </location>
</feature>
<feature type="transmembrane region" description="Helical; Name=II" evidence="1">
    <location>
        <begin position="41"/>
        <end position="66"/>
    </location>
</feature>
<feature type="topological domain" description="Mitochondrial matrix" evidence="1">
    <location>
        <begin position="67"/>
        <end position="72"/>
    </location>
</feature>
<feature type="transmembrane region" description="Helical; Name=III" evidence="1">
    <location>
        <begin position="73"/>
        <end position="105"/>
    </location>
</feature>
<feature type="topological domain" description="Mitochondrial intermembrane" evidence="1">
    <location>
        <begin position="106"/>
        <end position="128"/>
    </location>
</feature>
<feature type="transmembrane region" description="Helical; Name=IV" evidence="1">
    <location>
        <begin position="129"/>
        <end position="152"/>
    </location>
</feature>
<feature type="topological domain" description="Mitochondrial matrix" evidence="1">
    <location>
        <begin position="153"/>
        <end position="155"/>
    </location>
</feature>
<feature type="transmembrane region" description="Helical; Name=V" evidence="1">
    <location>
        <begin position="156"/>
        <end position="183"/>
    </location>
</feature>
<feature type="topological domain" description="Mitochondrial intermembrane" evidence="1">
    <location>
        <begin position="184"/>
        <end position="190"/>
    </location>
</feature>
<feature type="transmembrane region" description="Helical; Name=VI" evidence="1">
    <location>
        <begin position="191"/>
        <end position="223"/>
    </location>
</feature>
<feature type="topological domain" description="Mitochondrial matrix" evidence="1">
    <location>
        <begin position="224"/>
        <end position="232"/>
    </location>
</feature>
<feature type="transmembrane region" description="Helical; Name=VII" evidence="1">
    <location>
        <begin position="233"/>
        <end position="256"/>
    </location>
</feature>
<feature type="topological domain" description="Mitochondrial intermembrane" evidence="1">
    <location>
        <begin position="257"/>
        <end position="261"/>
    </location>
</feature>
<accession>Q95914</accession>
<evidence type="ECO:0000250" key="1">
    <source>
        <dbReference type="UniProtKB" id="P00415"/>
    </source>
</evidence>
<evidence type="ECO:0000250" key="2">
    <source>
        <dbReference type="UniProtKB" id="P00420"/>
    </source>
</evidence>
<evidence type="ECO:0000305" key="3"/>
<protein>
    <recommendedName>
        <fullName>Cytochrome c oxidase subunit 3</fullName>
        <ecNumber>7.1.1.9</ecNumber>
    </recommendedName>
    <alternativeName>
        <fullName>Cytochrome c oxidase polypeptide III</fullName>
    </alternativeName>
</protein>
<keyword id="KW-0472">Membrane</keyword>
<keyword id="KW-0496">Mitochondrion</keyword>
<keyword id="KW-0999">Mitochondrion inner membrane</keyword>
<keyword id="KW-1278">Translocase</keyword>
<keyword id="KW-0812">Transmembrane</keyword>
<keyword id="KW-1133">Transmembrane helix</keyword>
<comment type="function">
    <text evidence="2">Component of the cytochrome c oxidase, the last enzyme in the mitochondrial electron transport chain which drives oxidative phosphorylation. The respiratory chain contains 3 multisubunit complexes succinate dehydrogenase (complex II, CII), ubiquinol-cytochrome c oxidoreductase (cytochrome b-c1 complex, complex III, CIII) and cytochrome c oxidase (complex IV, CIV), that cooperate to transfer electrons derived from NADH and succinate to molecular oxygen, creating an electrochemical gradient over the inner membrane that drives transmembrane transport and the ATP synthase. Cytochrome c oxidase is the component of the respiratory chain that catalyzes the reduction of oxygen to water. Electrons originating from reduced cytochrome c in the intermembrane space (IMS) are transferred via the dinuclear copper A center (CU(A)) of subunit 2 and heme A of subunit 1 to the active site in subunit 1, a binuclear center (BNC) formed by heme A3 and copper B (CU(B)). The BNC reduces molecular oxygen to 2 water molecules using 4 electrons from cytochrome c in the IMS and 4 protons from the mitochondrial matrix.</text>
</comment>
<comment type="catalytic activity">
    <reaction evidence="2">
        <text>4 Fe(II)-[cytochrome c] + O2 + 8 H(+)(in) = 4 Fe(III)-[cytochrome c] + 2 H2O + 4 H(+)(out)</text>
        <dbReference type="Rhea" id="RHEA:11436"/>
        <dbReference type="Rhea" id="RHEA-COMP:10350"/>
        <dbReference type="Rhea" id="RHEA-COMP:14399"/>
        <dbReference type="ChEBI" id="CHEBI:15377"/>
        <dbReference type="ChEBI" id="CHEBI:15378"/>
        <dbReference type="ChEBI" id="CHEBI:15379"/>
        <dbReference type="ChEBI" id="CHEBI:29033"/>
        <dbReference type="ChEBI" id="CHEBI:29034"/>
        <dbReference type="EC" id="7.1.1.9"/>
    </reaction>
    <physiologicalReaction direction="left-to-right" evidence="2">
        <dbReference type="Rhea" id="RHEA:11437"/>
    </physiologicalReaction>
</comment>
<comment type="subunit">
    <text evidence="1">Component of the cytochrome c oxidase (complex IV, CIV), a multisubunit enzyme composed of 14 subunits. The complex is composed of a catalytic core of 3 subunits MT-CO1, MT-CO2 and MT-CO3, encoded in the mitochondrial DNA, and 11 supernumerary subunits COX4I, COX5A, COX5B, COX6A, COX6B, COX6C, COX7A, COX7B, COX7C, COX8 and NDUFA4, which are encoded in the nuclear genome. The complex exists as a monomer or a dimer and forms supercomplexes (SCs) in the inner mitochondrial membrane with NADH-ubiquinone oxidoreductase (complex I, CI) and ubiquinol-cytochrome c oxidoreductase (cytochrome b-c1 complex, complex III, CIII), resulting in different assemblies (supercomplex SCI(1)III(2)IV(1) and megacomplex MCI(2)III(2)IV(2)).</text>
</comment>
<comment type="subcellular location">
    <subcellularLocation>
        <location evidence="1">Mitochondrion inner membrane</location>
        <topology evidence="1">Multi-pass membrane protein</topology>
    </subcellularLocation>
</comment>
<comment type="similarity">
    <text evidence="3">Belongs to the cytochrome c oxidase subunit 3 family.</text>
</comment>
<geneLocation type="mitochondrion"/>
<sequence length="261" mass="29465">MAHQAHAYHMVDPSPWPLTGAVAALLLTSGLAVWFHFKSLTLLAMGLLLMILTMIQWWRDIIREGTFQGHHTPPVQKGLRYGMILFITSEVFFFLGFFWAFYHSSLAPTPELGGIWPPTGITPLDPFEVPLLNTAVLLASGVTVTWTHHSLMEGKRTEATQALTLTILLGLYFTALQAMEYYEAPFTIADGVYGTTFFVATGFHGLHVIIGSTFLAGCLLRQILYHFTSSHHFGFEAAAWYWHFVDVVWLFLYVSIYWWGS</sequence>
<gene>
    <name type="primary">mt-co3</name>
    <name type="synonym">coiii</name>
    <name type="synonym">coxiii</name>
    <name type="synonym">mtco3</name>
</gene>
<proteinExistence type="inferred from homology"/>